<organism>
    <name type="scientific">Escherichia coli O139:H28 (strain E24377A / ETEC)</name>
    <dbReference type="NCBI Taxonomy" id="331111"/>
    <lineage>
        <taxon>Bacteria</taxon>
        <taxon>Pseudomonadati</taxon>
        <taxon>Pseudomonadota</taxon>
        <taxon>Gammaproteobacteria</taxon>
        <taxon>Enterobacterales</taxon>
        <taxon>Enterobacteriaceae</taxon>
        <taxon>Escherichia</taxon>
    </lineage>
</organism>
<sequence length="94" mass="10693">MFTINAEVRKEQGKGASRRLRAANKFPAIIYGGKEAPLAIELDHDKVMNMQAKAEFYSEVLTIVVDGKEIKVKAQDVQRHPYKPKLQHIDFVRA</sequence>
<feature type="chain" id="PRO_1000067630" description="Large ribosomal subunit protein bL25">
    <location>
        <begin position="1"/>
        <end position="94"/>
    </location>
</feature>
<keyword id="KW-1185">Reference proteome</keyword>
<keyword id="KW-0687">Ribonucleoprotein</keyword>
<keyword id="KW-0689">Ribosomal protein</keyword>
<keyword id="KW-0694">RNA-binding</keyword>
<keyword id="KW-0699">rRNA-binding</keyword>
<evidence type="ECO:0000255" key="1">
    <source>
        <dbReference type="HAMAP-Rule" id="MF_01336"/>
    </source>
</evidence>
<evidence type="ECO:0000305" key="2"/>
<accession>A7ZP09</accession>
<dbReference type="EMBL" id="CP000800">
    <property type="protein sequence ID" value="ABV20188.1"/>
    <property type="molecule type" value="Genomic_DNA"/>
</dbReference>
<dbReference type="RefSeq" id="WP_000494183.1">
    <property type="nucleotide sequence ID" value="NC_009801.1"/>
</dbReference>
<dbReference type="BMRB" id="A7ZP09"/>
<dbReference type="SMR" id="A7ZP09"/>
<dbReference type="GeneID" id="93774996"/>
<dbReference type="KEGG" id="ecw:EcE24377A_2483"/>
<dbReference type="HOGENOM" id="CLU_137946_0_0_6"/>
<dbReference type="Proteomes" id="UP000001122">
    <property type="component" value="Chromosome"/>
</dbReference>
<dbReference type="GO" id="GO:0022625">
    <property type="term" value="C:cytosolic large ribosomal subunit"/>
    <property type="evidence" value="ECO:0007669"/>
    <property type="project" value="TreeGrafter"/>
</dbReference>
<dbReference type="GO" id="GO:0008097">
    <property type="term" value="F:5S rRNA binding"/>
    <property type="evidence" value="ECO:0007669"/>
    <property type="project" value="InterPro"/>
</dbReference>
<dbReference type="GO" id="GO:0003735">
    <property type="term" value="F:structural constituent of ribosome"/>
    <property type="evidence" value="ECO:0007669"/>
    <property type="project" value="InterPro"/>
</dbReference>
<dbReference type="GO" id="GO:0006412">
    <property type="term" value="P:translation"/>
    <property type="evidence" value="ECO:0007669"/>
    <property type="project" value="UniProtKB-UniRule"/>
</dbReference>
<dbReference type="CDD" id="cd00495">
    <property type="entry name" value="Ribosomal_L25_TL5_CTC"/>
    <property type="match status" value="1"/>
</dbReference>
<dbReference type="FunFam" id="2.40.240.10:FF:000002">
    <property type="entry name" value="50S ribosomal protein L25"/>
    <property type="match status" value="1"/>
</dbReference>
<dbReference type="Gene3D" id="2.40.240.10">
    <property type="entry name" value="Ribosomal Protein L25, Chain P"/>
    <property type="match status" value="1"/>
</dbReference>
<dbReference type="HAMAP" id="MF_01336">
    <property type="entry name" value="Ribosomal_bL25"/>
    <property type="match status" value="1"/>
</dbReference>
<dbReference type="InterPro" id="IPR020056">
    <property type="entry name" value="Rbsml_bL25/Gln-tRNA_synth_N"/>
</dbReference>
<dbReference type="InterPro" id="IPR011035">
    <property type="entry name" value="Ribosomal_bL25/Gln-tRNA_synth"/>
</dbReference>
<dbReference type="InterPro" id="IPR020055">
    <property type="entry name" value="Ribosomal_bL25_short"/>
</dbReference>
<dbReference type="InterPro" id="IPR029751">
    <property type="entry name" value="Ribosomal_L25_dom"/>
</dbReference>
<dbReference type="InterPro" id="IPR020930">
    <property type="entry name" value="Ribosomal_uL5_bac-type"/>
</dbReference>
<dbReference type="NCBIfam" id="NF004612">
    <property type="entry name" value="PRK05943.1"/>
    <property type="match status" value="1"/>
</dbReference>
<dbReference type="PANTHER" id="PTHR33284">
    <property type="entry name" value="RIBOSOMAL PROTEIN L25/GLN-TRNA SYNTHETASE, ANTI-CODON-BINDING DOMAIN-CONTAINING PROTEIN"/>
    <property type="match status" value="1"/>
</dbReference>
<dbReference type="PANTHER" id="PTHR33284:SF1">
    <property type="entry name" value="RIBOSOMAL PROTEIN L25_GLN-TRNA SYNTHETASE, ANTI-CODON-BINDING DOMAIN-CONTAINING PROTEIN"/>
    <property type="match status" value="1"/>
</dbReference>
<dbReference type="Pfam" id="PF01386">
    <property type="entry name" value="Ribosomal_L25p"/>
    <property type="match status" value="1"/>
</dbReference>
<dbReference type="SUPFAM" id="SSF50715">
    <property type="entry name" value="Ribosomal protein L25-like"/>
    <property type="match status" value="1"/>
</dbReference>
<comment type="function">
    <text evidence="1">This is one of the proteins that binds to the 5S RNA in the ribosome where it forms part of the central protuberance.</text>
</comment>
<comment type="subunit">
    <text evidence="1">Part of the 50S ribosomal subunit; part of the 5S rRNA/L5/L18/L25 subcomplex. Contacts the 5S rRNA. Binds to the 5S rRNA independently of L5 and L18.</text>
</comment>
<comment type="similarity">
    <text evidence="1">Belongs to the bacterial ribosomal protein bL25 family.</text>
</comment>
<gene>
    <name evidence="1" type="primary">rplY</name>
    <name type="ordered locus">EcE24377A_2483</name>
</gene>
<reference key="1">
    <citation type="journal article" date="2008" name="J. Bacteriol.">
        <title>The pangenome structure of Escherichia coli: comparative genomic analysis of E. coli commensal and pathogenic isolates.</title>
        <authorList>
            <person name="Rasko D.A."/>
            <person name="Rosovitz M.J."/>
            <person name="Myers G.S.A."/>
            <person name="Mongodin E.F."/>
            <person name="Fricke W.F."/>
            <person name="Gajer P."/>
            <person name="Crabtree J."/>
            <person name="Sebaihia M."/>
            <person name="Thomson N.R."/>
            <person name="Chaudhuri R."/>
            <person name="Henderson I.R."/>
            <person name="Sperandio V."/>
            <person name="Ravel J."/>
        </authorList>
    </citation>
    <scope>NUCLEOTIDE SEQUENCE [LARGE SCALE GENOMIC DNA]</scope>
    <source>
        <strain>E24377A / ETEC</strain>
    </source>
</reference>
<name>RL25_ECO24</name>
<proteinExistence type="inferred from homology"/>
<protein>
    <recommendedName>
        <fullName evidence="1">Large ribosomal subunit protein bL25</fullName>
    </recommendedName>
    <alternativeName>
        <fullName evidence="2">50S ribosomal protein L25</fullName>
    </alternativeName>
</protein>